<sequence>MDIAIQHPWFKRALGPFYPNRLFDQVFGEGMFDYDLFPFLSSTVSPYYRHSLFRGFMDSGISEVRSDRDRFTINLDVKHFSPDDLTVKILDDFVEIHGKHSERQDDHGYISREFHRRYRLPSNLDQSSISCSLSADGILTFSGPKMMSGLDSSHSERPIPVSREEKPTSAPSS</sequence>
<feature type="chain" id="PRO_0000125900" description="Alpha-crystallin A chain">
    <location>
        <begin position="1"/>
        <end position="173"/>
    </location>
</feature>
<feature type="domain" description="sHSP" evidence="4">
    <location>
        <begin position="52"/>
        <end position="162"/>
    </location>
</feature>
<feature type="region of interest" description="Disordered" evidence="5">
    <location>
        <begin position="146"/>
        <end position="173"/>
    </location>
</feature>
<feature type="compositionally biased region" description="Basic and acidic residues" evidence="5">
    <location>
        <begin position="153"/>
        <end position="167"/>
    </location>
</feature>
<feature type="binding site" evidence="2">
    <location>
        <position position="100"/>
    </location>
    <ligand>
        <name>Zn(2+)</name>
        <dbReference type="ChEBI" id="CHEBI:29105"/>
        <label>1</label>
    </ligand>
</feature>
<feature type="binding site" evidence="2">
    <location>
        <position position="102"/>
    </location>
    <ligand>
        <name>Zn(2+)</name>
        <dbReference type="ChEBI" id="CHEBI:29105"/>
        <label>1</label>
    </ligand>
</feature>
<feature type="binding site" evidence="2">
    <location>
        <position position="107"/>
    </location>
    <ligand>
        <name>Zn(2+)</name>
        <dbReference type="ChEBI" id="CHEBI:29105"/>
        <label>2</label>
    </ligand>
</feature>
<feature type="binding site" evidence="2">
    <location>
        <position position="154"/>
    </location>
    <ligand>
        <name>Zn(2+)</name>
        <dbReference type="ChEBI" id="CHEBI:29105"/>
        <label>3</label>
    </ligand>
</feature>
<feature type="modified residue" description="N-acetylmethionine" evidence="1">
    <location>
        <position position="1"/>
    </location>
</feature>
<comment type="function">
    <text evidence="3">Contributes to the transparency and refractive index of the lens. May act as a chaperone, preventing aggregation of various proteins under a wide range of stress conditions.</text>
</comment>
<comment type="subunit">
    <text evidence="2 3">Heteropolymer composed of three CRYAA and one CRYAB subunits (By similarity). Inter-subunit bridging via zinc ions enhances stability, which is crucial as there is no protein turn over in the lens. Can also form homodimers and homotetramers (dimers of dimers) which serve as the building blocks of homooligomers (By similarity). Within homooligomers, the zinc-binding motif is created from residues of 3 different molecules. His-100 and Glu-102 from one molecule are ligands of the zinc ion, and His-107 and His-154 residues from additional molecules complete the site with tetrahedral coordination geometry (By similarity).</text>
</comment>
<comment type="subcellular location">
    <subcellularLocation>
        <location evidence="3">Cytoplasm</location>
    </subcellularLocation>
    <subcellularLocation>
        <location evidence="3">Nucleus</location>
    </subcellularLocation>
    <text evidence="3">Translocates to the nucleus during heat shock.</text>
</comment>
<comment type="similarity">
    <text evidence="4">Belongs to the small heat shock protein (HSP20) family.</text>
</comment>
<dbReference type="EMBL" id="X85205">
    <property type="protein sequence ID" value="CAA59471.1"/>
    <property type="molecule type" value="mRNA"/>
</dbReference>
<dbReference type="PIR" id="JC4148">
    <property type="entry name" value="JC4148"/>
</dbReference>
<dbReference type="SMR" id="Q91311"/>
<dbReference type="GO" id="GO:0005737">
    <property type="term" value="C:cytoplasm"/>
    <property type="evidence" value="ECO:0007669"/>
    <property type="project" value="UniProtKB-SubCell"/>
</dbReference>
<dbReference type="GO" id="GO:0005634">
    <property type="term" value="C:nucleus"/>
    <property type="evidence" value="ECO:0007669"/>
    <property type="project" value="UniProtKB-SubCell"/>
</dbReference>
<dbReference type="GO" id="GO:0046872">
    <property type="term" value="F:metal ion binding"/>
    <property type="evidence" value="ECO:0007669"/>
    <property type="project" value="UniProtKB-KW"/>
</dbReference>
<dbReference type="GO" id="GO:0005212">
    <property type="term" value="F:structural constituent of eye lens"/>
    <property type="evidence" value="ECO:0007669"/>
    <property type="project" value="UniProtKB-KW"/>
</dbReference>
<dbReference type="GO" id="GO:0051082">
    <property type="term" value="F:unfolded protein binding"/>
    <property type="evidence" value="ECO:0007669"/>
    <property type="project" value="TreeGrafter"/>
</dbReference>
<dbReference type="GO" id="GO:0002088">
    <property type="term" value="P:lens development in camera-type eye"/>
    <property type="evidence" value="ECO:0007669"/>
    <property type="project" value="TreeGrafter"/>
</dbReference>
<dbReference type="GO" id="GO:0043066">
    <property type="term" value="P:negative regulation of apoptotic process"/>
    <property type="evidence" value="ECO:0007669"/>
    <property type="project" value="TreeGrafter"/>
</dbReference>
<dbReference type="GO" id="GO:0042026">
    <property type="term" value="P:protein refolding"/>
    <property type="evidence" value="ECO:0007669"/>
    <property type="project" value="TreeGrafter"/>
</dbReference>
<dbReference type="GO" id="GO:0009408">
    <property type="term" value="P:response to heat"/>
    <property type="evidence" value="ECO:0007669"/>
    <property type="project" value="TreeGrafter"/>
</dbReference>
<dbReference type="FunFam" id="2.60.40.790:FF:000008">
    <property type="entry name" value="Alpha-crystallin A chain"/>
    <property type="match status" value="1"/>
</dbReference>
<dbReference type="Gene3D" id="2.60.40.790">
    <property type="match status" value="1"/>
</dbReference>
<dbReference type="InterPro" id="IPR002068">
    <property type="entry name" value="A-crystallin/Hsp20_dom"/>
</dbReference>
<dbReference type="InterPro" id="IPR055269">
    <property type="entry name" value="Alpha-crystallin/HSP_16"/>
</dbReference>
<dbReference type="InterPro" id="IPR001436">
    <property type="entry name" value="Alpha-crystallin/sHSP_animal"/>
</dbReference>
<dbReference type="InterPro" id="IPR003090">
    <property type="entry name" value="Alpha-crystallin_N"/>
</dbReference>
<dbReference type="InterPro" id="IPR008978">
    <property type="entry name" value="HSP20-like_chaperone"/>
</dbReference>
<dbReference type="PANTHER" id="PTHR45640:SF14">
    <property type="entry name" value="ALPHA-CRYSTALLIN A CHAIN"/>
    <property type="match status" value="1"/>
</dbReference>
<dbReference type="PANTHER" id="PTHR45640">
    <property type="entry name" value="HEAT SHOCK PROTEIN HSP-12.2-RELATED"/>
    <property type="match status" value="1"/>
</dbReference>
<dbReference type="Pfam" id="PF00525">
    <property type="entry name" value="Crystallin"/>
    <property type="match status" value="1"/>
</dbReference>
<dbReference type="Pfam" id="PF00011">
    <property type="entry name" value="HSP20"/>
    <property type="match status" value="1"/>
</dbReference>
<dbReference type="PIRSF" id="PIRSF036514">
    <property type="entry name" value="Sm_HSP_B1"/>
    <property type="match status" value="1"/>
</dbReference>
<dbReference type="PRINTS" id="PR00299">
    <property type="entry name" value="ACRYSTALLIN"/>
</dbReference>
<dbReference type="SUPFAM" id="SSF49764">
    <property type="entry name" value="HSP20-like chaperones"/>
    <property type="match status" value="1"/>
</dbReference>
<dbReference type="PROSITE" id="PS01031">
    <property type="entry name" value="SHSP"/>
    <property type="match status" value="1"/>
</dbReference>
<keyword id="KW-0007">Acetylation</keyword>
<keyword id="KW-0963">Cytoplasm</keyword>
<keyword id="KW-0273">Eye lens protein</keyword>
<keyword id="KW-0479">Metal-binding</keyword>
<keyword id="KW-0539">Nucleus</keyword>
<keyword id="KW-0862">Zinc</keyword>
<reference key="1">
    <citation type="journal article" date="1995" name="Biochem. Biophys. Res. Commun.">
        <title>Sequence analysis of frog alpha-crystallin cDNA and its deduced primary structure: comparison of alpha A subunit chains among different vertebrate species.</title>
        <authorList>
            <person name="Lu S.F."/>
            <person name="Pan F.M."/>
            <person name="Chiou S.H."/>
        </authorList>
    </citation>
    <scope>NUCLEOTIDE SEQUENCE [MRNA]</scope>
</reference>
<organism>
    <name type="scientific">Aquarana catesbeiana</name>
    <name type="common">American bullfrog</name>
    <name type="synonym">Rana catesbeiana</name>
    <dbReference type="NCBI Taxonomy" id="8400"/>
    <lineage>
        <taxon>Eukaryota</taxon>
        <taxon>Metazoa</taxon>
        <taxon>Chordata</taxon>
        <taxon>Craniata</taxon>
        <taxon>Vertebrata</taxon>
        <taxon>Euteleostomi</taxon>
        <taxon>Amphibia</taxon>
        <taxon>Batrachia</taxon>
        <taxon>Anura</taxon>
        <taxon>Neobatrachia</taxon>
        <taxon>Ranoidea</taxon>
        <taxon>Ranidae</taxon>
        <taxon>Aquarana</taxon>
    </lineage>
</organism>
<evidence type="ECO:0000250" key="1"/>
<evidence type="ECO:0000250" key="2">
    <source>
        <dbReference type="UniProtKB" id="P02470"/>
    </source>
</evidence>
<evidence type="ECO:0000250" key="3">
    <source>
        <dbReference type="UniProtKB" id="P02489"/>
    </source>
</evidence>
<evidence type="ECO:0000255" key="4">
    <source>
        <dbReference type="PROSITE-ProRule" id="PRU00285"/>
    </source>
</evidence>
<evidence type="ECO:0000256" key="5">
    <source>
        <dbReference type="SAM" id="MobiDB-lite"/>
    </source>
</evidence>
<accession>Q91311</accession>
<gene>
    <name type="primary">CRYAA</name>
</gene>
<proteinExistence type="evidence at transcript level"/>
<protein>
    <recommendedName>
        <fullName>Alpha-crystallin A chain</fullName>
    </recommendedName>
</protein>
<name>CRYAA_AQUCT</name>